<feature type="chain" id="PRO_1000201546" description="Vitamin B12 import system permease protein BtuC">
    <location>
        <begin position="1"/>
        <end position="326"/>
    </location>
</feature>
<feature type="transmembrane region" description="Helical" evidence="1">
    <location>
        <begin position="15"/>
        <end position="35"/>
    </location>
</feature>
<feature type="transmembrane region" description="Helical" evidence="1">
    <location>
        <begin position="61"/>
        <end position="81"/>
    </location>
</feature>
<feature type="transmembrane region" description="Helical" evidence="1">
    <location>
        <begin position="88"/>
        <end position="108"/>
    </location>
</feature>
<feature type="transmembrane region" description="Helical" evidence="1">
    <location>
        <begin position="112"/>
        <end position="132"/>
    </location>
</feature>
<feature type="transmembrane region" description="Helical" evidence="1">
    <location>
        <begin position="146"/>
        <end position="166"/>
    </location>
</feature>
<feature type="transmembrane region" description="Helical" evidence="1">
    <location>
        <begin position="184"/>
        <end position="204"/>
    </location>
</feature>
<feature type="transmembrane region" description="Helical" evidence="1">
    <location>
        <begin position="240"/>
        <end position="260"/>
    </location>
</feature>
<feature type="transmembrane region" description="Helical" evidence="1">
    <location>
        <begin position="274"/>
        <end position="294"/>
    </location>
</feature>
<feature type="transmembrane region" description="Helical" evidence="1">
    <location>
        <begin position="302"/>
        <end position="322"/>
    </location>
</feature>
<keyword id="KW-0997">Cell inner membrane</keyword>
<keyword id="KW-1003">Cell membrane</keyword>
<keyword id="KW-0472">Membrane</keyword>
<keyword id="KW-0812">Transmembrane</keyword>
<keyword id="KW-1133">Transmembrane helix</keyword>
<keyword id="KW-0813">Transport</keyword>
<sequence>MLTLARQQQRQNIRWLLCLSVLMLLALLLSLCAGEQWISPGDWSTPRGELFVWQIRLPRTLAVLLVGAALAISGAVMQALFENPLAEPGLLGVSNGAGVGLIAAVLLGQGQLPNWALGLCAIAGALIITLILLRFARRHLSTSRLLLAGVALGIICSALMTWAIYFSTSVDLRQLMYWMMGGFGGVDWRQSWLMLALIPVLLWICCQSRPMNMLALGEISARQLGLPLWFWRNVLVAATGWMVGVSVALAGAIGFIGLVIPHILRLCGLTDHRVLLPGCALAGASALLLADVVARLALAAAELPIGVVTATLGAPVFIWLLLKAGR</sequence>
<dbReference type="EMBL" id="CU928163">
    <property type="protein sequence ID" value="CAR13198.1"/>
    <property type="molecule type" value="Genomic_DNA"/>
</dbReference>
<dbReference type="RefSeq" id="WP_000956538.1">
    <property type="nucleotide sequence ID" value="NC_011751.1"/>
</dbReference>
<dbReference type="RefSeq" id="YP_002412730.1">
    <property type="nucleotide sequence ID" value="NC_011751.1"/>
</dbReference>
<dbReference type="SMR" id="B7N549"/>
<dbReference type="STRING" id="585056.ECUMN_2002"/>
<dbReference type="KEGG" id="eum:ECUMN_2002"/>
<dbReference type="PATRIC" id="fig|585056.7.peg.2187"/>
<dbReference type="HOGENOM" id="CLU_013016_0_3_6"/>
<dbReference type="Proteomes" id="UP000007097">
    <property type="component" value="Chromosome"/>
</dbReference>
<dbReference type="GO" id="GO:0005886">
    <property type="term" value="C:plasma membrane"/>
    <property type="evidence" value="ECO:0007669"/>
    <property type="project" value="UniProtKB-SubCell"/>
</dbReference>
<dbReference type="GO" id="GO:0090482">
    <property type="term" value="F:vitamin transmembrane transporter activity"/>
    <property type="evidence" value="ECO:0007669"/>
    <property type="project" value="UniProtKB-UniRule"/>
</dbReference>
<dbReference type="GO" id="GO:0015889">
    <property type="term" value="P:cobalamin transport"/>
    <property type="evidence" value="ECO:0007669"/>
    <property type="project" value="UniProtKB-UniRule"/>
</dbReference>
<dbReference type="CDD" id="cd06550">
    <property type="entry name" value="TM_ABC_iron-siderophores_like"/>
    <property type="match status" value="1"/>
</dbReference>
<dbReference type="FunFam" id="1.10.3470.10:FF:000001">
    <property type="entry name" value="Vitamin B12 ABC transporter permease BtuC"/>
    <property type="match status" value="1"/>
</dbReference>
<dbReference type="Gene3D" id="1.10.3470.10">
    <property type="entry name" value="ABC transporter involved in vitamin B12 uptake, BtuC"/>
    <property type="match status" value="1"/>
</dbReference>
<dbReference type="HAMAP" id="MF_01004">
    <property type="entry name" value="BtuC"/>
    <property type="match status" value="1"/>
</dbReference>
<dbReference type="InterPro" id="IPR037294">
    <property type="entry name" value="ABC_BtuC-like"/>
</dbReference>
<dbReference type="InterPro" id="IPR023691">
    <property type="entry name" value="ABC_transptr_BtuC"/>
</dbReference>
<dbReference type="InterPro" id="IPR000522">
    <property type="entry name" value="ABC_transptr_permease_BtuC"/>
</dbReference>
<dbReference type="NCBIfam" id="NF003001">
    <property type="entry name" value="PRK03784.1"/>
    <property type="match status" value="1"/>
</dbReference>
<dbReference type="PANTHER" id="PTHR30472">
    <property type="entry name" value="FERRIC ENTEROBACTIN TRANSPORT SYSTEM PERMEASE PROTEIN"/>
    <property type="match status" value="1"/>
</dbReference>
<dbReference type="PANTHER" id="PTHR30472:SF29">
    <property type="entry name" value="VITAMIN B12 IMPORT SYSTEM PERMEASE PROTEIN BTUC"/>
    <property type="match status" value="1"/>
</dbReference>
<dbReference type="Pfam" id="PF01032">
    <property type="entry name" value="FecCD"/>
    <property type="match status" value="1"/>
</dbReference>
<dbReference type="SUPFAM" id="SSF81345">
    <property type="entry name" value="ABC transporter involved in vitamin B12 uptake, BtuC"/>
    <property type="match status" value="1"/>
</dbReference>
<organism>
    <name type="scientific">Escherichia coli O17:K52:H18 (strain UMN026 / ExPEC)</name>
    <dbReference type="NCBI Taxonomy" id="585056"/>
    <lineage>
        <taxon>Bacteria</taxon>
        <taxon>Pseudomonadati</taxon>
        <taxon>Pseudomonadota</taxon>
        <taxon>Gammaproteobacteria</taxon>
        <taxon>Enterobacterales</taxon>
        <taxon>Enterobacteriaceae</taxon>
        <taxon>Escherichia</taxon>
    </lineage>
</organism>
<name>BTUC_ECOLU</name>
<protein>
    <recommendedName>
        <fullName evidence="1">Vitamin B12 import system permease protein BtuC</fullName>
    </recommendedName>
</protein>
<comment type="function">
    <text evidence="1">Part of the ABC transporter complex BtuCDF involved in vitamin B12 import. Involved in the translocation of the substrate across the membrane.</text>
</comment>
<comment type="subunit">
    <text evidence="1">The complex is composed of two ATP-binding proteins (BtuD), two transmembrane proteins (BtuC) and a solute-binding protein (BtuF).</text>
</comment>
<comment type="subcellular location">
    <subcellularLocation>
        <location evidence="1">Cell inner membrane</location>
        <topology evidence="1">Multi-pass membrane protein</topology>
    </subcellularLocation>
</comment>
<comment type="similarity">
    <text evidence="1">Belongs to the binding-protein-dependent transport system permease family. FecCD subfamily.</text>
</comment>
<reference key="1">
    <citation type="journal article" date="2009" name="PLoS Genet.">
        <title>Organised genome dynamics in the Escherichia coli species results in highly diverse adaptive paths.</title>
        <authorList>
            <person name="Touchon M."/>
            <person name="Hoede C."/>
            <person name="Tenaillon O."/>
            <person name="Barbe V."/>
            <person name="Baeriswyl S."/>
            <person name="Bidet P."/>
            <person name="Bingen E."/>
            <person name="Bonacorsi S."/>
            <person name="Bouchier C."/>
            <person name="Bouvet O."/>
            <person name="Calteau A."/>
            <person name="Chiapello H."/>
            <person name="Clermont O."/>
            <person name="Cruveiller S."/>
            <person name="Danchin A."/>
            <person name="Diard M."/>
            <person name="Dossat C."/>
            <person name="Karoui M.E."/>
            <person name="Frapy E."/>
            <person name="Garry L."/>
            <person name="Ghigo J.M."/>
            <person name="Gilles A.M."/>
            <person name="Johnson J."/>
            <person name="Le Bouguenec C."/>
            <person name="Lescat M."/>
            <person name="Mangenot S."/>
            <person name="Martinez-Jehanne V."/>
            <person name="Matic I."/>
            <person name="Nassif X."/>
            <person name="Oztas S."/>
            <person name="Petit M.A."/>
            <person name="Pichon C."/>
            <person name="Rouy Z."/>
            <person name="Ruf C.S."/>
            <person name="Schneider D."/>
            <person name="Tourret J."/>
            <person name="Vacherie B."/>
            <person name="Vallenet D."/>
            <person name="Medigue C."/>
            <person name="Rocha E.P.C."/>
            <person name="Denamur E."/>
        </authorList>
    </citation>
    <scope>NUCLEOTIDE SEQUENCE [LARGE SCALE GENOMIC DNA]</scope>
    <source>
        <strain>UMN026 / ExPEC</strain>
    </source>
</reference>
<accession>B7N549</accession>
<proteinExistence type="inferred from homology"/>
<evidence type="ECO:0000255" key="1">
    <source>
        <dbReference type="HAMAP-Rule" id="MF_01004"/>
    </source>
</evidence>
<gene>
    <name evidence="1" type="primary">btuC</name>
    <name type="ordered locus">ECUMN_2002</name>
</gene>